<name>RL10_XYLFA</name>
<gene>
    <name type="primary">rplJ</name>
    <name type="ordered locus">XF_2635</name>
</gene>
<protein>
    <recommendedName>
        <fullName evidence="2">Large ribosomal subunit protein uL10</fullName>
    </recommendedName>
    <alternativeName>
        <fullName>50S ribosomal protein L10</fullName>
    </alternativeName>
</protein>
<feature type="chain" id="PRO_0000154751" description="Large ribosomal subunit protein uL10">
    <location>
        <begin position="1"/>
        <end position="175"/>
    </location>
</feature>
<accession>Q9PA84</accession>
<sequence>MALNIFQKQEVVEELAGVATKAHSLIVAEYAGITVSQMTAMRKQARESGVYLKVVKNKLAARALGDTEYAVIKEKLIGPLLYAFSLEDPGAAGRLIKEFSKKHDKLKSKTVSLGGVLYPAGHVDVLASLPTRLQALAMLARVLSEPVTLFARAIKAVADDKSETVAVSAPEASQA</sequence>
<keyword id="KW-0687">Ribonucleoprotein</keyword>
<keyword id="KW-0689">Ribosomal protein</keyword>
<keyword id="KW-0694">RNA-binding</keyword>
<keyword id="KW-0699">rRNA-binding</keyword>
<organism>
    <name type="scientific">Xylella fastidiosa (strain 9a5c)</name>
    <dbReference type="NCBI Taxonomy" id="160492"/>
    <lineage>
        <taxon>Bacteria</taxon>
        <taxon>Pseudomonadati</taxon>
        <taxon>Pseudomonadota</taxon>
        <taxon>Gammaproteobacteria</taxon>
        <taxon>Lysobacterales</taxon>
        <taxon>Lysobacteraceae</taxon>
        <taxon>Xylella</taxon>
    </lineage>
</organism>
<reference key="1">
    <citation type="journal article" date="2000" name="Nature">
        <title>The genome sequence of the plant pathogen Xylella fastidiosa.</title>
        <authorList>
            <person name="Simpson A.J.G."/>
            <person name="Reinach F.C."/>
            <person name="Arruda P."/>
            <person name="Abreu F.A."/>
            <person name="Acencio M."/>
            <person name="Alvarenga R."/>
            <person name="Alves L.M.C."/>
            <person name="Araya J.E."/>
            <person name="Baia G.S."/>
            <person name="Baptista C.S."/>
            <person name="Barros M.H."/>
            <person name="Bonaccorsi E.D."/>
            <person name="Bordin S."/>
            <person name="Bove J.M."/>
            <person name="Briones M.R.S."/>
            <person name="Bueno M.R.P."/>
            <person name="Camargo A.A."/>
            <person name="Camargo L.E.A."/>
            <person name="Carraro D.M."/>
            <person name="Carrer H."/>
            <person name="Colauto N.B."/>
            <person name="Colombo C."/>
            <person name="Costa F.F."/>
            <person name="Costa M.C.R."/>
            <person name="Costa-Neto C.M."/>
            <person name="Coutinho L.L."/>
            <person name="Cristofani M."/>
            <person name="Dias-Neto E."/>
            <person name="Docena C."/>
            <person name="El-Dorry H."/>
            <person name="Facincani A.P."/>
            <person name="Ferreira A.J.S."/>
            <person name="Ferreira V.C.A."/>
            <person name="Ferro J.A."/>
            <person name="Fraga J.S."/>
            <person name="Franca S.C."/>
            <person name="Franco M.C."/>
            <person name="Frohme M."/>
            <person name="Furlan L.R."/>
            <person name="Garnier M."/>
            <person name="Goldman G.H."/>
            <person name="Goldman M.H.S."/>
            <person name="Gomes S.L."/>
            <person name="Gruber A."/>
            <person name="Ho P.L."/>
            <person name="Hoheisel J.D."/>
            <person name="Junqueira M.L."/>
            <person name="Kemper E.L."/>
            <person name="Kitajima J.P."/>
            <person name="Krieger J.E."/>
            <person name="Kuramae E.E."/>
            <person name="Laigret F."/>
            <person name="Lambais M.R."/>
            <person name="Leite L.C.C."/>
            <person name="Lemos E.G.M."/>
            <person name="Lemos M.V.F."/>
            <person name="Lopes S.A."/>
            <person name="Lopes C.R."/>
            <person name="Machado J.A."/>
            <person name="Machado M.A."/>
            <person name="Madeira A.M.B.N."/>
            <person name="Madeira H.M.F."/>
            <person name="Marino C.L."/>
            <person name="Marques M.V."/>
            <person name="Martins E.A.L."/>
            <person name="Martins E.M.F."/>
            <person name="Matsukuma A.Y."/>
            <person name="Menck C.F.M."/>
            <person name="Miracca E.C."/>
            <person name="Miyaki C.Y."/>
            <person name="Monteiro-Vitorello C.B."/>
            <person name="Moon D.H."/>
            <person name="Nagai M.A."/>
            <person name="Nascimento A.L.T.O."/>
            <person name="Netto L.E.S."/>
            <person name="Nhani A. Jr."/>
            <person name="Nobrega F.G."/>
            <person name="Nunes L.R."/>
            <person name="Oliveira M.A."/>
            <person name="de Oliveira M.C."/>
            <person name="de Oliveira R.C."/>
            <person name="Palmieri D.A."/>
            <person name="Paris A."/>
            <person name="Peixoto B.R."/>
            <person name="Pereira G.A.G."/>
            <person name="Pereira H.A. Jr."/>
            <person name="Pesquero J.B."/>
            <person name="Quaggio R.B."/>
            <person name="Roberto P.G."/>
            <person name="Rodrigues V."/>
            <person name="de Rosa A.J.M."/>
            <person name="de Rosa V.E. Jr."/>
            <person name="de Sa R.G."/>
            <person name="Santelli R.V."/>
            <person name="Sawasaki H.E."/>
            <person name="da Silva A.C.R."/>
            <person name="da Silva A.M."/>
            <person name="da Silva F.R."/>
            <person name="Silva W.A. Jr."/>
            <person name="da Silveira J.F."/>
            <person name="Silvestri M.L.Z."/>
            <person name="Siqueira W.J."/>
            <person name="de Souza A.A."/>
            <person name="de Souza A.P."/>
            <person name="Terenzi M.F."/>
            <person name="Truffi D."/>
            <person name="Tsai S.M."/>
            <person name="Tsuhako M.H."/>
            <person name="Vallada H."/>
            <person name="Van Sluys M.A."/>
            <person name="Verjovski-Almeida S."/>
            <person name="Vettore A.L."/>
            <person name="Zago M.A."/>
            <person name="Zatz M."/>
            <person name="Meidanis J."/>
            <person name="Setubal J.C."/>
        </authorList>
    </citation>
    <scope>NUCLEOTIDE SEQUENCE [LARGE SCALE GENOMIC DNA]</scope>
    <source>
        <strain>9a5c</strain>
    </source>
</reference>
<dbReference type="EMBL" id="AE003849">
    <property type="protein sequence ID" value="AAF85432.1"/>
    <property type="status" value="ALT_INIT"/>
    <property type="molecule type" value="Genomic_DNA"/>
</dbReference>
<dbReference type="PIR" id="G82533">
    <property type="entry name" value="G82533"/>
</dbReference>
<dbReference type="RefSeq" id="WP_010895051.1">
    <property type="nucleotide sequence ID" value="NC_002488.3"/>
</dbReference>
<dbReference type="SMR" id="Q9PA84"/>
<dbReference type="STRING" id="160492.XF_2635"/>
<dbReference type="KEGG" id="xfa:XF_2635"/>
<dbReference type="eggNOG" id="COG0244">
    <property type="taxonomic scope" value="Bacteria"/>
</dbReference>
<dbReference type="HOGENOM" id="CLU_092227_0_1_6"/>
<dbReference type="Proteomes" id="UP000000812">
    <property type="component" value="Chromosome"/>
</dbReference>
<dbReference type="GO" id="GO:0015934">
    <property type="term" value="C:large ribosomal subunit"/>
    <property type="evidence" value="ECO:0007669"/>
    <property type="project" value="InterPro"/>
</dbReference>
<dbReference type="GO" id="GO:0070180">
    <property type="term" value="F:large ribosomal subunit rRNA binding"/>
    <property type="evidence" value="ECO:0007669"/>
    <property type="project" value="UniProtKB-UniRule"/>
</dbReference>
<dbReference type="GO" id="GO:0003735">
    <property type="term" value="F:structural constituent of ribosome"/>
    <property type="evidence" value="ECO:0007669"/>
    <property type="project" value="InterPro"/>
</dbReference>
<dbReference type="GO" id="GO:0006412">
    <property type="term" value="P:translation"/>
    <property type="evidence" value="ECO:0007669"/>
    <property type="project" value="UniProtKB-UniRule"/>
</dbReference>
<dbReference type="CDD" id="cd05797">
    <property type="entry name" value="Ribosomal_L10"/>
    <property type="match status" value="1"/>
</dbReference>
<dbReference type="Gene3D" id="3.30.70.1730">
    <property type="match status" value="1"/>
</dbReference>
<dbReference type="HAMAP" id="MF_00362">
    <property type="entry name" value="Ribosomal_uL10"/>
    <property type="match status" value="1"/>
</dbReference>
<dbReference type="InterPro" id="IPR001790">
    <property type="entry name" value="Ribosomal_uL10"/>
</dbReference>
<dbReference type="InterPro" id="IPR043141">
    <property type="entry name" value="Ribosomal_uL10-like_sf"/>
</dbReference>
<dbReference type="InterPro" id="IPR022973">
    <property type="entry name" value="Ribosomal_uL10_bac"/>
</dbReference>
<dbReference type="InterPro" id="IPR047865">
    <property type="entry name" value="Ribosomal_uL10_bac_type"/>
</dbReference>
<dbReference type="InterPro" id="IPR002363">
    <property type="entry name" value="Ribosomal_uL10_CS_bac"/>
</dbReference>
<dbReference type="NCBIfam" id="NF000955">
    <property type="entry name" value="PRK00099.1-1"/>
    <property type="match status" value="1"/>
</dbReference>
<dbReference type="PANTHER" id="PTHR11560">
    <property type="entry name" value="39S RIBOSOMAL PROTEIN L10, MITOCHONDRIAL"/>
    <property type="match status" value="1"/>
</dbReference>
<dbReference type="Pfam" id="PF00466">
    <property type="entry name" value="Ribosomal_L10"/>
    <property type="match status" value="1"/>
</dbReference>
<dbReference type="SUPFAM" id="SSF160369">
    <property type="entry name" value="Ribosomal protein L10-like"/>
    <property type="match status" value="1"/>
</dbReference>
<dbReference type="PROSITE" id="PS01109">
    <property type="entry name" value="RIBOSOMAL_L10"/>
    <property type="match status" value="1"/>
</dbReference>
<evidence type="ECO:0000250" key="1"/>
<evidence type="ECO:0000305" key="2"/>
<proteinExistence type="inferred from homology"/>
<comment type="function">
    <text evidence="1">Forms part of the ribosomal stalk, playing a central role in the interaction of the ribosome with GTP-bound translation factors.</text>
</comment>
<comment type="subunit">
    <text evidence="1">Part of the ribosomal stalk of the 50S ribosomal subunit. The N-terminus interacts with L11 and the large rRNA to form the base of the stalk. The C-terminus forms an elongated spine to which L12 dimers bind in a sequential fashion forming a multimeric L10(L12)X complex (By similarity).</text>
</comment>
<comment type="similarity">
    <text evidence="2">Belongs to the universal ribosomal protein uL10 family.</text>
</comment>
<comment type="sequence caution" evidence="2">
    <conflict type="erroneous initiation">
        <sequence resource="EMBL-CDS" id="AAF85432"/>
    </conflict>
</comment>